<proteinExistence type="inferred from homology"/>
<keyword id="KW-0963">Cytoplasm</keyword>
<keyword id="KW-0460">Magnesium</keyword>
<keyword id="KW-0479">Metal-binding</keyword>
<keyword id="KW-0566">Pantothenate biosynthesis</keyword>
<keyword id="KW-1185">Reference proteome</keyword>
<keyword id="KW-0808">Transferase</keyword>
<feature type="chain" id="PRO_1000096979" description="3-methyl-2-oxobutanoate hydroxymethyltransferase">
    <location>
        <begin position="1"/>
        <end position="268"/>
    </location>
</feature>
<feature type="active site" description="Proton acceptor" evidence="1">
    <location>
        <position position="183"/>
    </location>
</feature>
<feature type="binding site" evidence="1">
    <location>
        <begin position="44"/>
        <end position="45"/>
    </location>
    <ligand>
        <name>3-methyl-2-oxobutanoate</name>
        <dbReference type="ChEBI" id="CHEBI:11851"/>
    </ligand>
</feature>
<feature type="binding site" evidence="1">
    <location>
        <position position="44"/>
    </location>
    <ligand>
        <name>Mg(2+)</name>
        <dbReference type="ChEBI" id="CHEBI:18420"/>
    </ligand>
</feature>
<feature type="binding site" evidence="1">
    <location>
        <position position="83"/>
    </location>
    <ligand>
        <name>3-methyl-2-oxobutanoate</name>
        <dbReference type="ChEBI" id="CHEBI:11851"/>
    </ligand>
</feature>
<feature type="binding site" evidence="1">
    <location>
        <position position="83"/>
    </location>
    <ligand>
        <name>Mg(2+)</name>
        <dbReference type="ChEBI" id="CHEBI:18420"/>
    </ligand>
</feature>
<feature type="binding site" evidence="1">
    <location>
        <position position="113"/>
    </location>
    <ligand>
        <name>3-methyl-2-oxobutanoate</name>
        <dbReference type="ChEBI" id="CHEBI:11851"/>
    </ligand>
</feature>
<feature type="binding site" evidence="1">
    <location>
        <position position="115"/>
    </location>
    <ligand>
        <name>Mg(2+)</name>
        <dbReference type="ChEBI" id="CHEBI:18420"/>
    </ligand>
</feature>
<name>PANB_LEPBP</name>
<sequence>MKNIILQYKKKYDAGEPISVVTCYDYTFATLFNRTDVDCLLVGDSLGMVIQGNQSTLPVTLDEIIYHTKAVCKGAPDKTIIADLPFLSYQTSIEEGIRSAGRVLKETNASCVKLEGDSEFIIELTKRMTESGIPVFAHLGLTPQSVHTLGGHRVQGKTEAARNKMIRKSRELAEAGAFALLLEMVPESLGKEITESIRIPTIGIGAGKYTSGQVLVMQDLLGLNEDFHPKFLKKFGNLSGAVKEAVNAYHKEVTKREYPSEAHVFLDT</sequence>
<dbReference type="EC" id="2.1.2.11" evidence="1"/>
<dbReference type="EMBL" id="CP000786">
    <property type="protein sequence ID" value="ABZ96415.1"/>
    <property type="molecule type" value="Genomic_DNA"/>
</dbReference>
<dbReference type="RefSeq" id="WP_012387303.1">
    <property type="nucleotide sequence ID" value="NC_010602.1"/>
</dbReference>
<dbReference type="SMR" id="B0STK1"/>
<dbReference type="STRING" id="456481.LEPBI_I0271"/>
<dbReference type="KEGG" id="lbi:LEPBI_I0271"/>
<dbReference type="HOGENOM" id="CLU_036645_1_0_12"/>
<dbReference type="OrthoDB" id="9781789at2"/>
<dbReference type="BioCyc" id="LBIF456481:LEPBI_RS01325-MONOMER"/>
<dbReference type="UniPathway" id="UPA00028">
    <property type="reaction ID" value="UER00003"/>
</dbReference>
<dbReference type="Proteomes" id="UP000001847">
    <property type="component" value="Chromosome I"/>
</dbReference>
<dbReference type="GO" id="GO:0005737">
    <property type="term" value="C:cytoplasm"/>
    <property type="evidence" value="ECO:0007669"/>
    <property type="project" value="UniProtKB-SubCell"/>
</dbReference>
<dbReference type="GO" id="GO:0003864">
    <property type="term" value="F:3-methyl-2-oxobutanoate hydroxymethyltransferase activity"/>
    <property type="evidence" value="ECO:0007669"/>
    <property type="project" value="UniProtKB-UniRule"/>
</dbReference>
<dbReference type="GO" id="GO:0000287">
    <property type="term" value="F:magnesium ion binding"/>
    <property type="evidence" value="ECO:0007669"/>
    <property type="project" value="TreeGrafter"/>
</dbReference>
<dbReference type="GO" id="GO:0015940">
    <property type="term" value="P:pantothenate biosynthetic process"/>
    <property type="evidence" value="ECO:0007669"/>
    <property type="project" value="UniProtKB-UniRule"/>
</dbReference>
<dbReference type="CDD" id="cd06557">
    <property type="entry name" value="KPHMT-like"/>
    <property type="match status" value="1"/>
</dbReference>
<dbReference type="FunFam" id="3.20.20.60:FF:000003">
    <property type="entry name" value="3-methyl-2-oxobutanoate hydroxymethyltransferase"/>
    <property type="match status" value="1"/>
</dbReference>
<dbReference type="Gene3D" id="3.20.20.60">
    <property type="entry name" value="Phosphoenolpyruvate-binding domains"/>
    <property type="match status" value="1"/>
</dbReference>
<dbReference type="HAMAP" id="MF_00156">
    <property type="entry name" value="PanB"/>
    <property type="match status" value="1"/>
</dbReference>
<dbReference type="InterPro" id="IPR003700">
    <property type="entry name" value="Pantoate_hydroxy_MeTrfase"/>
</dbReference>
<dbReference type="InterPro" id="IPR015813">
    <property type="entry name" value="Pyrv/PenolPyrv_kinase-like_dom"/>
</dbReference>
<dbReference type="InterPro" id="IPR040442">
    <property type="entry name" value="Pyrv_kinase-like_dom_sf"/>
</dbReference>
<dbReference type="NCBIfam" id="TIGR00222">
    <property type="entry name" value="panB"/>
    <property type="match status" value="1"/>
</dbReference>
<dbReference type="NCBIfam" id="NF001452">
    <property type="entry name" value="PRK00311.1"/>
    <property type="match status" value="1"/>
</dbReference>
<dbReference type="PANTHER" id="PTHR20881">
    <property type="entry name" value="3-METHYL-2-OXOBUTANOATE HYDROXYMETHYLTRANSFERASE"/>
    <property type="match status" value="1"/>
</dbReference>
<dbReference type="PANTHER" id="PTHR20881:SF0">
    <property type="entry name" value="3-METHYL-2-OXOBUTANOATE HYDROXYMETHYLTRANSFERASE"/>
    <property type="match status" value="1"/>
</dbReference>
<dbReference type="Pfam" id="PF02548">
    <property type="entry name" value="Pantoate_transf"/>
    <property type="match status" value="1"/>
</dbReference>
<dbReference type="PIRSF" id="PIRSF000388">
    <property type="entry name" value="Pantoate_hydroxy_MeTrfase"/>
    <property type="match status" value="1"/>
</dbReference>
<dbReference type="SUPFAM" id="SSF51621">
    <property type="entry name" value="Phosphoenolpyruvate/pyruvate domain"/>
    <property type="match status" value="1"/>
</dbReference>
<comment type="function">
    <text evidence="1">Catalyzes the reversible reaction in which hydroxymethyl group from 5,10-methylenetetrahydrofolate is transferred onto alpha-ketoisovalerate to form ketopantoate.</text>
</comment>
<comment type="catalytic activity">
    <reaction evidence="1">
        <text>3-methyl-2-oxobutanoate + (6R)-5,10-methylene-5,6,7,8-tetrahydrofolate + H2O = 2-dehydropantoate + (6S)-5,6,7,8-tetrahydrofolate</text>
        <dbReference type="Rhea" id="RHEA:11824"/>
        <dbReference type="ChEBI" id="CHEBI:11561"/>
        <dbReference type="ChEBI" id="CHEBI:11851"/>
        <dbReference type="ChEBI" id="CHEBI:15377"/>
        <dbReference type="ChEBI" id="CHEBI:15636"/>
        <dbReference type="ChEBI" id="CHEBI:57453"/>
        <dbReference type="EC" id="2.1.2.11"/>
    </reaction>
</comment>
<comment type="cofactor">
    <cofactor evidence="1">
        <name>Mg(2+)</name>
        <dbReference type="ChEBI" id="CHEBI:18420"/>
    </cofactor>
    <text evidence="1">Binds 1 Mg(2+) ion per subunit.</text>
</comment>
<comment type="pathway">
    <text evidence="1">Cofactor biosynthesis; (R)-pantothenate biosynthesis; (R)-pantoate from 3-methyl-2-oxobutanoate: step 1/2.</text>
</comment>
<comment type="subunit">
    <text evidence="1">Homodecamer; pentamer of dimers.</text>
</comment>
<comment type="subcellular location">
    <subcellularLocation>
        <location evidence="1">Cytoplasm</location>
    </subcellularLocation>
</comment>
<comment type="similarity">
    <text evidence="1">Belongs to the PanB family.</text>
</comment>
<reference key="1">
    <citation type="journal article" date="2008" name="PLoS ONE">
        <title>Genome sequence of the saprophyte Leptospira biflexa provides insights into the evolution of Leptospira and the pathogenesis of leptospirosis.</title>
        <authorList>
            <person name="Picardeau M."/>
            <person name="Bulach D.M."/>
            <person name="Bouchier C."/>
            <person name="Zuerner R.L."/>
            <person name="Zidane N."/>
            <person name="Wilson P.J."/>
            <person name="Creno S."/>
            <person name="Kuczek E.S."/>
            <person name="Bommezzadri S."/>
            <person name="Davis J.C."/>
            <person name="McGrath A."/>
            <person name="Johnson M.J."/>
            <person name="Boursaux-Eude C."/>
            <person name="Seemann T."/>
            <person name="Rouy Z."/>
            <person name="Coppel R.L."/>
            <person name="Rood J.I."/>
            <person name="Lajus A."/>
            <person name="Davies J.K."/>
            <person name="Medigue C."/>
            <person name="Adler B."/>
        </authorList>
    </citation>
    <scope>NUCLEOTIDE SEQUENCE [LARGE SCALE GENOMIC DNA]</scope>
    <source>
        <strain>Patoc 1 / ATCC 23582 / Paris</strain>
    </source>
</reference>
<protein>
    <recommendedName>
        <fullName evidence="1">3-methyl-2-oxobutanoate hydroxymethyltransferase</fullName>
        <ecNumber evidence="1">2.1.2.11</ecNumber>
    </recommendedName>
    <alternativeName>
        <fullName evidence="1">Ketopantoate hydroxymethyltransferase</fullName>
        <shortName evidence="1">KPHMT</shortName>
    </alternativeName>
</protein>
<gene>
    <name evidence="1" type="primary">panB</name>
    <name type="ordered locus">LEPBI_I0271</name>
</gene>
<organism>
    <name type="scientific">Leptospira biflexa serovar Patoc (strain Patoc 1 / ATCC 23582 / Paris)</name>
    <dbReference type="NCBI Taxonomy" id="456481"/>
    <lineage>
        <taxon>Bacteria</taxon>
        <taxon>Pseudomonadati</taxon>
        <taxon>Spirochaetota</taxon>
        <taxon>Spirochaetia</taxon>
        <taxon>Leptospirales</taxon>
        <taxon>Leptospiraceae</taxon>
        <taxon>Leptospira</taxon>
    </lineage>
</organism>
<accession>B0STK1</accession>
<evidence type="ECO:0000255" key="1">
    <source>
        <dbReference type="HAMAP-Rule" id="MF_00156"/>
    </source>
</evidence>